<evidence type="ECO:0000269" key="1">
    <source>
    </source>
</evidence>
<evidence type="ECO:0000269" key="2">
    <source>
    </source>
</evidence>
<evidence type="ECO:0000305" key="3"/>
<feature type="chain" id="PRO_0000072638" description="Exotoxin A regulatory protein">
    <location>
        <begin position="1"/>
        <end position="259"/>
    </location>
</feature>
<feature type="sequence conflict" description="In Ref. 1 and 3." evidence="3" ref="1 3">
    <original>T</original>
    <variation>A</variation>
    <location>
        <position position="144"/>
    </location>
</feature>
<sequence length="259" mass="28855">MTATDRTPPPLKWLCLGNRDANDGFELFAHGIYARNGALVGSKLSLRERRQRVDLSAFLSGAPPLLAEAAVKHLLARLLCVHRHNTDLELLGKNFIPLHASSLGNAGVCERILASARQLQQHQVELCLLLAIDEQEPASAEYLTSLARLRDSGVRIALHPQRIDTDARQCFAEVDAGLCDYLGLDARLLAPGPLTRNLRQRKSIEYLNRLLVAQDIQMLCLNVDNEELHQQANALPFAFRHGRHYSEPFQAWPFSSPAC</sequence>
<gene>
    <name type="primary">toxR</name>
    <name type="synonym">regA</name>
    <name type="ordered locus">PA0707</name>
</gene>
<name>TOXR_PSEAE</name>
<accession>P09852</accession>
<keyword id="KW-0010">Activator</keyword>
<keyword id="KW-0997">Cell inner membrane</keyword>
<keyword id="KW-1003">Cell membrane</keyword>
<keyword id="KW-0472">Membrane</keyword>
<keyword id="KW-1185">Reference proteome</keyword>
<keyword id="KW-0804">Transcription</keyword>
<keyword id="KW-0805">Transcription regulation</keyword>
<protein>
    <recommendedName>
        <fullName>Exotoxin A regulatory protein</fullName>
    </recommendedName>
</protein>
<dbReference type="EMBL" id="X12366">
    <property type="protein sequence ID" value="CAA30927.1"/>
    <property type="molecule type" value="Genomic_DNA"/>
</dbReference>
<dbReference type="EMBL" id="M31686">
    <property type="protein sequence ID" value="AAA02982.1"/>
    <property type="status" value="ALT_FRAME"/>
    <property type="molecule type" value="Genomic_DNA"/>
</dbReference>
<dbReference type="EMBL" id="AE004091">
    <property type="protein sequence ID" value="AAG04096.1"/>
    <property type="molecule type" value="Genomic_DNA"/>
</dbReference>
<dbReference type="EMBL" id="M29685">
    <property type="protein sequence ID" value="AAA25981.1"/>
    <property type="molecule type" value="Genomic_DNA"/>
</dbReference>
<dbReference type="PIR" id="A26569">
    <property type="entry name" value="A26569"/>
</dbReference>
<dbReference type="PIR" id="D83557">
    <property type="entry name" value="D83557"/>
</dbReference>
<dbReference type="PIR" id="S03173">
    <property type="entry name" value="S03173"/>
</dbReference>
<dbReference type="RefSeq" id="NP_249398.1">
    <property type="nucleotide sequence ID" value="NC_002516.2"/>
</dbReference>
<dbReference type="RefSeq" id="WP_010793844.1">
    <property type="nucleotide sequence ID" value="NZ_QZGE01000025.1"/>
</dbReference>
<dbReference type="SMR" id="P09852"/>
<dbReference type="STRING" id="208964.PA0707"/>
<dbReference type="PaxDb" id="208964-PA0707"/>
<dbReference type="DNASU" id="880684"/>
<dbReference type="GeneID" id="880684"/>
<dbReference type="KEGG" id="pae:PA0707"/>
<dbReference type="PATRIC" id="fig|208964.12.peg.741"/>
<dbReference type="PseudoCAP" id="PA0707"/>
<dbReference type="HOGENOM" id="CLU_1115016_0_0_6"/>
<dbReference type="InParanoid" id="P09852"/>
<dbReference type="OrthoDB" id="6833020at2"/>
<dbReference type="BioCyc" id="PAER208964:G1FZ6-718-MONOMER"/>
<dbReference type="Proteomes" id="UP000002438">
    <property type="component" value="Chromosome"/>
</dbReference>
<dbReference type="GO" id="GO:0005886">
    <property type="term" value="C:plasma membrane"/>
    <property type="evidence" value="ECO:0007669"/>
    <property type="project" value="UniProtKB-SubCell"/>
</dbReference>
<dbReference type="GO" id="GO:0045893">
    <property type="term" value="P:positive regulation of DNA-templated transcription"/>
    <property type="evidence" value="ECO:0000314"/>
    <property type="project" value="PseudoCAP"/>
</dbReference>
<dbReference type="Gene3D" id="3.20.20.450">
    <property type="entry name" value="EAL domain"/>
    <property type="match status" value="1"/>
</dbReference>
<dbReference type="InterPro" id="IPR001633">
    <property type="entry name" value="EAL_dom"/>
</dbReference>
<dbReference type="InterPro" id="IPR035919">
    <property type="entry name" value="EAL_sf"/>
</dbReference>
<dbReference type="Pfam" id="PF00563">
    <property type="entry name" value="EAL"/>
    <property type="match status" value="1"/>
</dbReference>
<dbReference type="SUPFAM" id="SSF141868">
    <property type="entry name" value="EAL domain-like"/>
    <property type="match status" value="1"/>
</dbReference>
<comment type="function">
    <text evidence="2">Positive regulation of toxA gene transcription.</text>
</comment>
<comment type="subcellular location">
    <subcellularLocation>
        <location evidence="1">Cell inner membrane</location>
        <topology evidence="1">Peripheral membrane protein</topology>
    </subcellularLocation>
</comment>
<comment type="sequence caution" evidence="3">
    <conflict type="frameshift">
        <sequence resource="EMBL-CDS" id="AAA02982"/>
    </conflict>
</comment>
<proteinExistence type="evidence at protein level"/>
<organism>
    <name type="scientific">Pseudomonas aeruginosa (strain ATCC 15692 / DSM 22644 / CIP 104116 / JCM 14847 / LMG 12228 / 1C / PRS 101 / PAO1)</name>
    <dbReference type="NCBI Taxonomy" id="208964"/>
    <lineage>
        <taxon>Bacteria</taxon>
        <taxon>Pseudomonadati</taxon>
        <taxon>Pseudomonadota</taxon>
        <taxon>Gammaproteobacteria</taxon>
        <taxon>Pseudomonadales</taxon>
        <taxon>Pseudomonadaceae</taxon>
        <taxon>Pseudomonas</taxon>
    </lineage>
</organism>
<reference key="1">
    <citation type="journal article" date="1988" name="Nucleic Acids Res.">
        <title>Characterization of a gene that regulates toxin A synthesis in Pseudomonas aeruginosa.</title>
        <authorList>
            <person name="Hindahl M.S."/>
            <person name="Frank D.W."/>
            <person name="Hamood A."/>
            <person name="Iglewski B.H."/>
        </authorList>
    </citation>
    <scope>NUCLEOTIDE SEQUENCE [GENOMIC DNA]</scope>
    <source>
        <strain>ATCC 29260 / PA103</strain>
    </source>
</reference>
<reference key="2">
    <citation type="journal article" date="1988" name="Nucleic Acids Res.">
        <authorList>
            <person name="Hindahl M.S."/>
            <person name="Frank D.W."/>
            <person name="Hamood A."/>
            <person name="Iglewski B.H."/>
        </authorList>
    </citation>
    <scope>ERRATUM OF PUBMED:3133641</scope>
    <scope>SEQUENCE REVISION</scope>
</reference>
<reference key="3">
    <citation type="journal article" date="1987" name="Nucleic Acids Res.">
        <title>Nucleotide sequence and characterization of toxR: a gene involved in exotoxin A regulation in Pseudomonas aeruginosa.</title>
        <authorList>
            <person name="Wozniak D.J."/>
            <person name="Cram D.C."/>
            <person name="Daniels C.J."/>
            <person name="Galloway D.R."/>
        </authorList>
    </citation>
    <scope>NUCLEOTIDE SEQUENCE [GENOMIC DNA]</scope>
    <scope>FUNCTION</scope>
    <scope>CHARACTERIZATION</scope>
</reference>
<reference key="4">
    <citation type="journal article" date="2000" name="Nature">
        <title>Complete genome sequence of Pseudomonas aeruginosa PAO1, an opportunistic pathogen.</title>
        <authorList>
            <person name="Stover C.K."/>
            <person name="Pham X.-Q.T."/>
            <person name="Erwin A.L."/>
            <person name="Mizoguchi S.D."/>
            <person name="Warrener P."/>
            <person name="Hickey M.J."/>
            <person name="Brinkman F.S.L."/>
            <person name="Hufnagle W.O."/>
            <person name="Kowalik D.J."/>
            <person name="Lagrou M."/>
            <person name="Garber R.L."/>
            <person name="Goltry L."/>
            <person name="Tolentino E."/>
            <person name="Westbrock-Wadman S."/>
            <person name="Yuan Y."/>
            <person name="Brody L.L."/>
            <person name="Coulter S.N."/>
            <person name="Folger K.R."/>
            <person name="Kas A."/>
            <person name="Larbig K."/>
            <person name="Lim R.M."/>
            <person name="Smith K.A."/>
            <person name="Spencer D.H."/>
            <person name="Wong G.K.-S."/>
            <person name="Wu Z."/>
            <person name="Paulsen I.T."/>
            <person name="Reizer J."/>
            <person name="Saier M.H. Jr."/>
            <person name="Hancock R.E.W."/>
            <person name="Lory S."/>
            <person name="Olson M.V."/>
        </authorList>
    </citation>
    <scope>NUCLEOTIDE SEQUENCE [LARGE SCALE GENOMIC DNA]</scope>
    <source>
        <strain>ATCC 15692 / DSM 22644 / CIP 104116 / JCM 14847 / LMG 12228 / 1C / PRS 101 / PAO1</strain>
    </source>
</reference>
<reference key="5">
    <citation type="journal article" date="1989" name="J. Bacteriol.">
        <title>Differential regulation by iron of regA and toxA transcript accumulation in Pseudomonas aeruginosa.</title>
        <authorList>
            <person name="Frank D.W."/>
            <person name="Storey D.G."/>
            <person name="Hindahl M.S."/>
            <person name="Iglewski B.H."/>
        </authorList>
    </citation>
    <scope>NUCLEOTIDE SEQUENCE [GENOMIC DNA] OF 1-21</scope>
</reference>
<reference key="6">
    <citation type="journal article" date="1990" name="J. Bacteriol.">
        <title>Expression of the Pseudomonas aeruginosa toxA positive regulatory gene (regA) in Escherichia coli.</title>
        <authorList>
            <person name="Hamood A."/>
            <person name="Iglewski B.H."/>
        </authorList>
    </citation>
    <scope>SUBCELLULAR LOCATION</scope>
</reference>